<name>PROA_XYLFT</name>
<keyword id="KW-0028">Amino-acid biosynthesis</keyword>
<keyword id="KW-0963">Cytoplasm</keyword>
<keyword id="KW-0521">NADP</keyword>
<keyword id="KW-0560">Oxidoreductase</keyword>
<keyword id="KW-0641">Proline biosynthesis</keyword>
<keyword id="KW-1185">Reference proteome</keyword>
<comment type="function">
    <text evidence="1">Catalyzes the NADPH-dependent reduction of L-glutamate 5-phosphate into L-glutamate 5-semialdehyde and phosphate. The product spontaneously undergoes cyclization to form 1-pyrroline-5-carboxylate.</text>
</comment>
<comment type="catalytic activity">
    <reaction evidence="1">
        <text>L-glutamate 5-semialdehyde + phosphate + NADP(+) = L-glutamyl 5-phosphate + NADPH + H(+)</text>
        <dbReference type="Rhea" id="RHEA:19541"/>
        <dbReference type="ChEBI" id="CHEBI:15378"/>
        <dbReference type="ChEBI" id="CHEBI:43474"/>
        <dbReference type="ChEBI" id="CHEBI:57783"/>
        <dbReference type="ChEBI" id="CHEBI:58066"/>
        <dbReference type="ChEBI" id="CHEBI:58274"/>
        <dbReference type="ChEBI" id="CHEBI:58349"/>
        <dbReference type="EC" id="1.2.1.41"/>
    </reaction>
</comment>
<comment type="pathway">
    <text evidence="1">Amino-acid biosynthesis; L-proline biosynthesis; L-glutamate 5-semialdehyde from L-glutamate: step 2/2.</text>
</comment>
<comment type="subcellular location">
    <subcellularLocation>
        <location evidence="1">Cytoplasm</location>
    </subcellularLocation>
</comment>
<comment type="similarity">
    <text evidence="1">Belongs to the gamma-glutamyl phosphate reductase family.</text>
</comment>
<organism>
    <name type="scientific">Xylella fastidiosa (strain Temecula1 / ATCC 700964)</name>
    <dbReference type="NCBI Taxonomy" id="183190"/>
    <lineage>
        <taxon>Bacteria</taxon>
        <taxon>Pseudomonadati</taxon>
        <taxon>Pseudomonadota</taxon>
        <taxon>Gammaproteobacteria</taxon>
        <taxon>Lysobacterales</taxon>
        <taxon>Lysobacteraceae</taxon>
        <taxon>Xylella</taxon>
    </lineage>
</organism>
<sequence length="425" mass="45650">MSHIRHLAQQCRDAARILATLSTDAKRRLLETMATALNTDAATILAANAADLDAARTQQVGTAMLDRLALDPQRLAAMADALRDIAALPDPVGQVTRDDRRPNGIHIQKIRVPLGVIAMIYEARPNVTADAAALCIKAGNGIILRGGSEAIRSNIAIATALQRALRLASLPETALILVQDMARHTMLELLQLSDLIDLVIPRGGEGLIRFVAEHARIPVIKHYKGVCHQFVDASADIEMAIRLLIDGKTTRPAACNALETLLVHTDIAPRFLPAAAAALRPYGVQLRGDHATCTLLPDVLLATDADYAAEYLDLILAIRIVPNLDAALEHIRRYGSDHTEVIVTADPAHADTFVQQLPSAVVMVNASSRFSDGGALGLGAEIGISTTRLHAYGPMGLDALTVERFVVRGQGQVRHCPPYPPAPRR</sequence>
<protein>
    <recommendedName>
        <fullName evidence="1">Gamma-glutamyl phosphate reductase</fullName>
        <shortName evidence="1">GPR</shortName>
        <ecNumber evidence="1">1.2.1.41</ecNumber>
    </recommendedName>
    <alternativeName>
        <fullName evidence="1">Glutamate-5-semialdehyde dehydrogenase</fullName>
    </alternativeName>
    <alternativeName>
        <fullName evidence="1">Glutamyl-gamma-semialdehyde dehydrogenase</fullName>
        <shortName evidence="1">GSA dehydrogenase</shortName>
    </alternativeName>
</protein>
<accession>Q87EK9</accession>
<reference key="1">
    <citation type="journal article" date="2003" name="J. Bacteriol.">
        <title>Comparative analyses of the complete genome sequences of Pierce's disease and citrus variegated chlorosis strains of Xylella fastidiosa.</title>
        <authorList>
            <person name="Van Sluys M.A."/>
            <person name="de Oliveira M.C."/>
            <person name="Monteiro-Vitorello C.B."/>
            <person name="Miyaki C.Y."/>
            <person name="Furlan L.R."/>
            <person name="Camargo L.E.A."/>
            <person name="da Silva A.C.R."/>
            <person name="Moon D.H."/>
            <person name="Takita M.A."/>
            <person name="Lemos E.G.M."/>
            <person name="Machado M.A."/>
            <person name="Ferro M.I.T."/>
            <person name="da Silva F.R."/>
            <person name="Goldman M.H.S."/>
            <person name="Goldman G.H."/>
            <person name="Lemos M.V.F."/>
            <person name="El-Dorry H."/>
            <person name="Tsai S.M."/>
            <person name="Carrer H."/>
            <person name="Carraro D.M."/>
            <person name="de Oliveira R.C."/>
            <person name="Nunes L.R."/>
            <person name="Siqueira W.J."/>
            <person name="Coutinho L.L."/>
            <person name="Kimura E.T."/>
            <person name="Ferro E.S."/>
            <person name="Harakava R."/>
            <person name="Kuramae E.E."/>
            <person name="Marino C.L."/>
            <person name="Giglioti E."/>
            <person name="Abreu I.L."/>
            <person name="Alves L.M.C."/>
            <person name="do Amaral A.M."/>
            <person name="Baia G.S."/>
            <person name="Blanco S.R."/>
            <person name="Brito M.S."/>
            <person name="Cannavan F.S."/>
            <person name="Celestino A.V."/>
            <person name="da Cunha A.F."/>
            <person name="Fenille R.C."/>
            <person name="Ferro J.A."/>
            <person name="Formighieri E.F."/>
            <person name="Kishi L.T."/>
            <person name="Leoni S.G."/>
            <person name="Oliveira A.R."/>
            <person name="Rosa V.E. Jr."/>
            <person name="Sassaki F.T."/>
            <person name="Sena J.A.D."/>
            <person name="de Souza A.A."/>
            <person name="Truffi D."/>
            <person name="Tsukumo F."/>
            <person name="Yanai G.M."/>
            <person name="Zaros L.G."/>
            <person name="Civerolo E.L."/>
            <person name="Simpson A.J.G."/>
            <person name="Almeida N.F. Jr."/>
            <person name="Setubal J.C."/>
            <person name="Kitajima J.P."/>
        </authorList>
    </citation>
    <scope>NUCLEOTIDE SEQUENCE [LARGE SCALE GENOMIC DNA]</scope>
    <source>
        <strain>Temecula1 / ATCC 700964</strain>
    </source>
</reference>
<feature type="chain" id="PRO_0000189817" description="Gamma-glutamyl phosphate reductase">
    <location>
        <begin position="1"/>
        <end position="425"/>
    </location>
</feature>
<gene>
    <name evidence="1" type="primary">proA</name>
    <name type="ordered locus">PD_0297</name>
</gene>
<dbReference type="EC" id="1.2.1.41" evidence="1"/>
<dbReference type="EMBL" id="AE009442">
    <property type="protein sequence ID" value="AAO28182.1"/>
    <property type="molecule type" value="Genomic_DNA"/>
</dbReference>
<dbReference type="RefSeq" id="WP_004087888.1">
    <property type="nucleotide sequence ID" value="NC_004556.1"/>
</dbReference>
<dbReference type="SMR" id="Q87EK9"/>
<dbReference type="KEGG" id="xft:PD_0297"/>
<dbReference type="HOGENOM" id="CLU_030231_0_0_6"/>
<dbReference type="UniPathway" id="UPA00098">
    <property type="reaction ID" value="UER00360"/>
</dbReference>
<dbReference type="Proteomes" id="UP000002516">
    <property type="component" value="Chromosome"/>
</dbReference>
<dbReference type="GO" id="GO:0005737">
    <property type="term" value="C:cytoplasm"/>
    <property type="evidence" value="ECO:0007669"/>
    <property type="project" value="UniProtKB-SubCell"/>
</dbReference>
<dbReference type="GO" id="GO:0004350">
    <property type="term" value="F:glutamate-5-semialdehyde dehydrogenase activity"/>
    <property type="evidence" value="ECO:0007669"/>
    <property type="project" value="UniProtKB-UniRule"/>
</dbReference>
<dbReference type="GO" id="GO:0050661">
    <property type="term" value="F:NADP binding"/>
    <property type="evidence" value="ECO:0007669"/>
    <property type="project" value="InterPro"/>
</dbReference>
<dbReference type="GO" id="GO:0055129">
    <property type="term" value="P:L-proline biosynthetic process"/>
    <property type="evidence" value="ECO:0007669"/>
    <property type="project" value="UniProtKB-UniRule"/>
</dbReference>
<dbReference type="CDD" id="cd07079">
    <property type="entry name" value="ALDH_F18-19_ProA-GPR"/>
    <property type="match status" value="1"/>
</dbReference>
<dbReference type="FunFam" id="3.40.309.10:FF:000006">
    <property type="entry name" value="Gamma-glutamyl phosphate reductase"/>
    <property type="match status" value="1"/>
</dbReference>
<dbReference type="Gene3D" id="3.40.605.10">
    <property type="entry name" value="Aldehyde Dehydrogenase, Chain A, domain 1"/>
    <property type="match status" value="1"/>
</dbReference>
<dbReference type="Gene3D" id="3.40.309.10">
    <property type="entry name" value="Aldehyde Dehydrogenase, Chain A, domain 2"/>
    <property type="match status" value="1"/>
</dbReference>
<dbReference type="HAMAP" id="MF_00412">
    <property type="entry name" value="ProA"/>
    <property type="match status" value="1"/>
</dbReference>
<dbReference type="InterPro" id="IPR016161">
    <property type="entry name" value="Ald_DH/histidinol_DH"/>
</dbReference>
<dbReference type="InterPro" id="IPR016163">
    <property type="entry name" value="Ald_DH_C"/>
</dbReference>
<dbReference type="InterPro" id="IPR016162">
    <property type="entry name" value="Ald_DH_N"/>
</dbReference>
<dbReference type="InterPro" id="IPR015590">
    <property type="entry name" value="Aldehyde_DH_dom"/>
</dbReference>
<dbReference type="InterPro" id="IPR020593">
    <property type="entry name" value="G-glutamylP_reductase_CS"/>
</dbReference>
<dbReference type="InterPro" id="IPR012134">
    <property type="entry name" value="Glu-5-SA_DH"/>
</dbReference>
<dbReference type="InterPro" id="IPR000965">
    <property type="entry name" value="GPR_dom"/>
</dbReference>
<dbReference type="NCBIfam" id="NF001221">
    <property type="entry name" value="PRK00197.1"/>
    <property type="match status" value="1"/>
</dbReference>
<dbReference type="NCBIfam" id="TIGR00407">
    <property type="entry name" value="proA"/>
    <property type="match status" value="1"/>
</dbReference>
<dbReference type="PANTHER" id="PTHR11063:SF8">
    <property type="entry name" value="DELTA-1-PYRROLINE-5-CARBOXYLATE SYNTHASE"/>
    <property type="match status" value="1"/>
</dbReference>
<dbReference type="PANTHER" id="PTHR11063">
    <property type="entry name" value="GLUTAMATE SEMIALDEHYDE DEHYDROGENASE"/>
    <property type="match status" value="1"/>
</dbReference>
<dbReference type="Pfam" id="PF00171">
    <property type="entry name" value="Aldedh"/>
    <property type="match status" value="1"/>
</dbReference>
<dbReference type="PIRSF" id="PIRSF000151">
    <property type="entry name" value="GPR"/>
    <property type="match status" value="1"/>
</dbReference>
<dbReference type="SUPFAM" id="SSF53720">
    <property type="entry name" value="ALDH-like"/>
    <property type="match status" value="1"/>
</dbReference>
<dbReference type="PROSITE" id="PS01223">
    <property type="entry name" value="PROA"/>
    <property type="match status" value="1"/>
</dbReference>
<proteinExistence type="inferred from homology"/>
<evidence type="ECO:0000255" key="1">
    <source>
        <dbReference type="HAMAP-Rule" id="MF_00412"/>
    </source>
</evidence>